<keyword id="KW-0256">Endoplasmic reticulum</keyword>
<keyword id="KW-0472">Membrane</keyword>
<keyword id="KW-1185">Reference proteome</keyword>
<keyword id="KW-0812">Transmembrane</keyword>
<keyword id="KW-1133">Transmembrane helix</keyword>
<organism>
    <name type="scientific">Caenorhabditis briggsae</name>
    <dbReference type="NCBI Taxonomy" id="6238"/>
    <lineage>
        <taxon>Eukaryota</taxon>
        <taxon>Metazoa</taxon>
        <taxon>Ecdysozoa</taxon>
        <taxon>Nematoda</taxon>
        <taxon>Chromadorea</taxon>
        <taxon>Rhabditida</taxon>
        <taxon>Rhabditina</taxon>
        <taxon>Rhabditomorpha</taxon>
        <taxon>Rhabditoidea</taxon>
        <taxon>Rhabditidae</taxon>
        <taxon>Peloderinae</taxon>
        <taxon>Caenorhabditis</taxon>
    </lineage>
</organism>
<protein>
    <recommendedName>
        <fullName>Signal peptidase complex subunit 2</fullName>
    </recommendedName>
    <alternativeName>
        <fullName>Microsomal signal peptidase 25 kDa subunit</fullName>
        <shortName>SPase 25 kDa subunit</shortName>
    </alternativeName>
</protein>
<dbReference type="EMBL" id="HE600979">
    <property type="protein sequence ID" value="CAP33939.1"/>
    <property type="molecule type" value="Genomic_DNA"/>
</dbReference>
<dbReference type="SMR" id="Q615A2"/>
<dbReference type="FunCoup" id="Q615A2">
    <property type="interactions" value="2692"/>
</dbReference>
<dbReference type="STRING" id="6238.Q615A2"/>
<dbReference type="EnsemblMetazoa" id="CBG15767.1">
    <property type="protein sequence ID" value="CBG15767.1"/>
    <property type="gene ID" value="WBGene00035909"/>
</dbReference>
<dbReference type="KEGG" id="cbr:CBG_15767"/>
<dbReference type="CTD" id="8582870"/>
<dbReference type="WormBase" id="CBG15767">
    <property type="protein sequence ID" value="CBP03769"/>
    <property type="gene ID" value="WBGene00035909"/>
    <property type="gene designation" value="Cbr-spcs-2"/>
</dbReference>
<dbReference type="eggNOG" id="KOG4072">
    <property type="taxonomic scope" value="Eukaryota"/>
</dbReference>
<dbReference type="HOGENOM" id="CLU_094622_0_0_1"/>
<dbReference type="InParanoid" id="Q615A2"/>
<dbReference type="OMA" id="INKWDGT"/>
<dbReference type="OrthoDB" id="29558at2759"/>
<dbReference type="Proteomes" id="UP000008549">
    <property type="component" value="Unassembled WGS sequence"/>
</dbReference>
<dbReference type="GO" id="GO:0005787">
    <property type="term" value="C:signal peptidase complex"/>
    <property type="evidence" value="ECO:0000318"/>
    <property type="project" value="GO_Central"/>
</dbReference>
<dbReference type="GO" id="GO:0045047">
    <property type="term" value="P:protein targeting to ER"/>
    <property type="evidence" value="ECO:0000318"/>
    <property type="project" value="GO_Central"/>
</dbReference>
<dbReference type="GO" id="GO:0006465">
    <property type="term" value="P:signal peptide processing"/>
    <property type="evidence" value="ECO:0000318"/>
    <property type="project" value="GO_Central"/>
</dbReference>
<dbReference type="InterPro" id="IPR009582">
    <property type="entry name" value="Spc2/SPCS2"/>
</dbReference>
<dbReference type="PANTHER" id="PTHR13085">
    <property type="entry name" value="MICROSOMAL SIGNAL PEPTIDASE 25 KDA SUBUNIT"/>
    <property type="match status" value="1"/>
</dbReference>
<dbReference type="PANTHER" id="PTHR13085:SF0">
    <property type="entry name" value="SIGNAL PEPTIDASE COMPLEX SUBUNIT 2"/>
    <property type="match status" value="1"/>
</dbReference>
<dbReference type="Pfam" id="PF06703">
    <property type="entry name" value="SPC25"/>
    <property type="match status" value="1"/>
</dbReference>
<gene>
    <name evidence="6" type="primary">spcs-2</name>
    <name evidence="6" type="synonym">hpo-21</name>
    <name evidence="6" type="ORF">CBG15767</name>
</gene>
<proteinExistence type="inferred from homology"/>
<feature type="chain" id="PRO_0000221164" description="Signal peptidase complex subunit 2">
    <location>
        <begin position="1"/>
        <end position="180"/>
    </location>
</feature>
<feature type="topological domain" description="Cytoplasmic" evidence="3">
    <location>
        <begin position="1"/>
        <end position="45"/>
    </location>
</feature>
<feature type="transmembrane region" description="Helical" evidence="4">
    <location>
        <begin position="46"/>
        <end position="66"/>
    </location>
</feature>
<feature type="topological domain" description="Lumenal" evidence="3">
    <location>
        <begin position="67"/>
        <end position="72"/>
    </location>
</feature>
<feature type="transmembrane region" description="Helical" evidence="4">
    <location>
        <begin position="73"/>
        <end position="93"/>
    </location>
</feature>
<feature type="topological domain" description="Cytoplasmic" evidence="3">
    <location>
        <begin position="94"/>
        <end position="180"/>
    </location>
</feature>
<accession>Q615A2</accession>
<accession>A8XMR3</accession>
<comment type="function">
    <text evidence="1 2">Component of the signal peptidase complex (SPC) which catalyzes the cleavage of N-terminal signal sequences from nascent proteins as they are translocated into the lumen of the endoplasmic reticulum (By similarity). Enhances the enzymatic activity of SPC and facilitates the interactions between different components of the translocation site (By similarity).</text>
</comment>
<comment type="subunit">
    <text evidence="2">Component of the signal peptidase complex (SPC) composed of a catalytic subunit sec-11 and three accessory subunits spcs-1, spcs-2 and spcs-3. The complex induces a local thinning of the ER membrane which is used to measure the length of the signal peptide (SP) h-region of protein substrates. This ensures the selectivity of the complex towards h-regions shorter than 18-20 amino acids.</text>
</comment>
<comment type="subcellular location">
    <subcellularLocation>
        <location evidence="3">Endoplasmic reticulum membrane</location>
        <topology evidence="3">Multi-pass membrane protein</topology>
    </subcellularLocation>
</comment>
<comment type="similarity">
    <text evidence="5">Belongs to the SPCS2 family.</text>
</comment>
<name>SPCS2_CAEBR</name>
<reference key="1">
    <citation type="journal article" date="2003" name="PLoS Biol.">
        <title>The genome sequence of Caenorhabditis briggsae: a platform for comparative genomics.</title>
        <authorList>
            <person name="Stein L.D."/>
            <person name="Bao Z."/>
            <person name="Blasiar D."/>
            <person name="Blumenthal T."/>
            <person name="Brent M.R."/>
            <person name="Chen N."/>
            <person name="Chinwalla A."/>
            <person name="Clarke L."/>
            <person name="Clee C."/>
            <person name="Coghlan A."/>
            <person name="Coulson A."/>
            <person name="D'Eustachio P."/>
            <person name="Fitch D.H.A."/>
            <person name="Fulton L.A."/>
            <person name="Fulton R.E."/>
            <person name="Griffiths-Jones S."/>
            <person name="Harris T.W."/>
            <person name="Hillier L.W."/>
            <person name="Kamath R."/>
            <person name="Kuwabara P.E."/>
            <person name="Mardis E.R."/>
            <person name="Marra M.A."/>
            <person name="Miner T.L."/>
            <person name="Minx P."/>
            <person name="Mullikin J.C."/>
            <person name="Plumb R.W."/>
            <person name="Rogers J."/>
            <person name="Schein J.E."/>
            <person name="Sohrmann M."/>
            <person name="Spieth J."/>
            <person name="Stajich J.E."/>
            <person name="Wei C."/>
            <person name="Willey D."/>
            <person name="Wilson R.K."/>
            <person name="Durbin R.M."/>
            <person name="Waterston R.H."/>
        </authorList>
    </citation>
    <scope>NUCLEOTIDE SEQUENCE [LARGE SCALE GENOMIC DNA]</scope>
    <source>
        <strain>AF16</strain>
    </source>
</reference>
<sequence length="180" mass="20687">MSDERITVVNKWDGPTVKNGLDEVVKKILNDKVGWTEQHNLMNLRLLISFIGVAFSAFACGYDFYAPFPKSKIVLLVCSVSYFICMGVLQLFQWYVEKDCFYEANEVDGKQTRKWAWSSEIKAHDDKYVLSAEFKKEGRSGQGKIIKSIGAYIDNDGEIMIPLVQREVDDLWARLIRSEQ</sequence>
<evidence type="ECO:0000250" key="1">
    <source>
        <dbReference type="UniProtKB" id="Q04969"/>
    </source>
</evidence>
<evidence type="ECO:0000250" key="2">
    <source>
        <dbReference type="UniProtKB" id="Q15005"/>
    </source>
</evidence>
<evidence type="ECO:0000250" key="3">
    <source>
        <dbReference type="UniProtKB" id="Q28250"/>
    </source>
</evidence>
<evidence type="ECO:0000255" key="4"/>
<evidence type="ECO:0000305" key="5"/>
<evidence type="ECO:0000312" key="6">
    <source>
        <dbReference type="WormBase" id="CBG15767"/>
    </source>
</evidence>